<evidence type="ECO:0000255" key="1">
    <source>
        <dbReference type="HAMAP-Rule" id="MF_01342"/>
    </source>
</evidence>
<evidence type="ECO:0000305" key="2"/>
<protein>
    <recommendedName>
        <fullName evidence="1">Large ribosomal subunit protein uL16</fullName>
    </recommendedName>
    <alternativeName>
        <fullName evidence="2">50S ribosomal protein L16</fullName>
    </alternativeName>
</protein>
<reference key="1">
    <citation type="journal article" date="2008" name="J. Bacteriol.">
        <title>Complete genome sequence of Leuconostoc citreum KM20.</title>
        <authorList>
            <person name="Kim J.F."/>
            <person name="Jeong H."/>
            <person name="Lee J.-S."/>
            <person name="Choi S.-H."/>
            <person name="Ha M."/>
            <person name="Hur C.-G."/>
            <person name="Kim J.-S."/>
            <person name="Lee S."/>
            <person name="Park H.-S."/>
            <person name="Park Y.-H."/>
            <person name="Oh T.K."/>
        </authorList>
    </citation>
    <scope>NUCLEOTIDE SEQUENCE [LARGE SCALE GENOMIC DNA]</scope>
    <source>
        <strain>KM20</strain>
    </source>
</reference>
<organism>
    <name type="scientific">Leuconostoc citreum (strain KM20)</name>
    <dbReference type="NCBI Taxonomy" id="349519"/>
    <lineage>
        <taxon>Bacteria</taxon>
        <taxon>Bacillati</taxon>
        <taxon>Bacillota</taxon>
        <taxon>Bacilli</taxon>
        <taxon>Lactobacillales</taxon>
        <taxon>Lactobacillaceae</taxon>
        <taxon>Leuconostoc</taxon>
    </lineage>
</organism>
<feature type="chain" id="PRO_1000142992" description="Large ribosomal subunit protein uL16">
    <location>
        <begin position="1"/>
        <end position="137"/>
    </location>
</feature>
<comment type="function">
    <text evidence="1">Binds 23S rRNA and is also seen to make contacts with the A and possibly P site tRNAs.</text>
</comment>
<comment type="subunit">
    <text evidence="1">Part of the 50S ribosomal subunit.</text>
</comment>
<comment type="similarity">
    <text evidence="1">Belongs to the universal ribosomal protein uL16 family.</text>
</comment>
<keyword id="KW-1185">Reference proteome</keyword>
<keyword id="KW-0687">Ribonucleoprotein</keyword>
<keyword id="KW-0689">Ribosomal protein</keyword>
<keyword id="KW-0694">RNA-binding</keyword>
<keyword id="KW-0699">rRNA-binding</keyword>
<keyword id="KW-0820">tRNA-binding</keyword>
<gene>
    <name evidence="1" type="primary">rplP</name>
    <name type="ordered locus">LCK_01588</name>
</gene>
<dbReference type="EMBL" id="DQ489736">
    <property type="protein sequence ID" value="ACA83411.1"/>
    <property type="molecule type" value="Genomic_DNA"/>
</dbReference>
<dbReference type="RefSeq" id="WP_004899453.1">
    <property type="nucleotide sequence ID" value="NC_010471.1"/>
</dbReference>
<dbReference type="SMR" id="B1MW07"/>
<dbReference type="STRING" id="349519.LCK_01588"/>
<dbReference type="GeneID" id="61103248"/>
<dbReference type="KEGG" id="lci:LCK_01588"/>
<dbReference type="eggNOG" id="COG0197">
    <property type="taxonomic scope" value="Bacteria"/>
</dbReference>
<dbReference type="HOGENOM" id="CLU_078858_2_1_9"/>
<dbReference type="OrthoDB" id="9802589at2"/>
<dbReference type="Proteomes" id="UP000002166">
    <property type="component" value="Chromosome"/>
</dbReference>
<dbReference type="GO" id="GO:0022625">
    <property type="term" value="C:cytosolic large ribosomal subunit"/>
    <property type="evidence" value="ECO:0007669"/>
    <property type="project" value="TreeGrafter"/>
</dbReference>
<dbReference type="GO" id="GO:0019843">
    <property type="term" value="F:rRNA binding"/>
    <property type="evidence" value="ECO:0007669"/>
    <property type="project" value="UniProtKB-UniRule"/>
</dbReference>
<dbReference type="GO" id="GO:0003735">
    <property type="term" value="F:structural constituent of ribosome"/>
    <property type="evidence" value="ECO:0007669"/>
    <property type="project" value="InterPro"/>
</dbReference>
<dbReference type="GO" id="GO:0000049">
    <property type="term" value="F:tRNA binding"/>
    <property type="evidence" value="ECO:0007669"/>
    <property type="project" value="UniProtKB-KW"/>
</dbReference>
<dbReference type="GO" id="GO:0006412">
    <property type="term" value="P:translation"/>
    <property type="evidence" value="ECO:0007669"/>
    <property type="project" value="UniProtKB-UniRule"/>
</dbReference>
<dbReference type="CDD" id="cd01433">
    <property type="entry name" value="Ribosomal_L16_L10e"/>
    <property type="match status" value="1"/>
</dbReference>
<dbReference type="FunFam" id="3.90.1170.10:FF:000001">
    <property type="entry name" value="50S ribosomal protein L16"/>
    <property type="match status" value="1"/>
</dbReference>
<dbReference type="Gene3D" id="3.90.1170.10">
    <property type="entry name" value="Ribosomal protein L10e/L16"/>
    <property type="match status" value="1"/>
</dbReference>
<dbReference type="HAMAP" id="MF_01342">
    <property type="entry name" value="Ribosomal_uL16"/>
    <property type="match status" value="1"/>
</dbReference>
<dbReference type="InterPro" id="IPR047873">
    <property type="entry name" value="Ribosomal_uL16"/>
</dbReference>
<dbReference type="InterPro" id="IPR000114">
    <property type="entry name" value="Ribosomal_uL16_bact-type"/>
</dbReference>
<dbReference type="InterPro" id="IPR020798">
    <property type="entry name" value="Ribosomal_uL16_CS"/>
</dbReference>
<dbReference type="InterPro" id="IPR016180">
    <property type="entry name" value="Ribosomal_uL16_dom"/>
</dbReference>
<dbReference type="InterPro" id="IPR036920">
    <property type="entry name" value="Ribosomal_uL16_sf"/>
</dbReference>
<dbReference type="NCBIfam" id="TIGR01164">
    <property type="entry name" value="rplP_bact"/>
    <property type="match status" value="1"/>
</dbReference>
<dbReference type="PANTHER" id="PTHR12220">
    <property type="entry name" value="50S/60S RIBOSOMAL PROTEIN L16"/>
    <property type="match status" value="1"/>
</dbReference>
<dbReference type="PANTHER" id="PTHR12220:SF13">
    <property type="entry name" value="LARGE RIBOSOMAL SUBUNIT PROTEIN UL16M"/>
    <property type="match status" value="1"/>
</dbReference>
<dbReference type="Pfam" id="PF00252">
    <property type="entry name" value="Ribosomal_L16"/>
    <property type="match status" value="1"/>
</dbReference>
<dbReference type="PRINTS" id="PR00060">
    <property type="entry name" value="RIBOSOMALL16"/>
</dbReference>
<dbReference type="SUPFAM" id="SSF54686">
    <property type="entry name" value="Ribosomal protein L16p/L10e"/>
    <property type="match status" value="1"/>
</dbReference>
<dbReference type="PROSITE" id="PS00586">
    <property type="entry name" value="RIBOSOMAL_L16_1"/>
    <property type="match status" value="1"/>
</dbReference>
<dbReference type="PROSITE" id="PS00701">
    <property type="entry name" value="RIBOSOMAL_L16_2"/>
    <property type="match status" value="1"/>
</dbReference>
<sequence>MLVPKRVKFRRVHRGHMRGEAKGGKTVAFGEFGLQATTSSWITNRQIEAARIAMTRYMKRGGKVWIKIFPHKSYTSKGVGVRMGNGKGAPEGWVEPVKRGKVMFEVGGVPEATAREALRLAQHKLPVRTKIIAREAE</sequence>
<name>RL16_LEUCK</name>
<accession>B1MW07</accession>
<proteinExistence type="inferred from homology"/>